<accession>A4FZY2</accession>
<name>G1PDH_METM5</name>
<dbReference type="EC" id="1.1.1.261" evidence="1"/>
<dbReference type="EMBL" id="CP000609">
    <property type="protein sequence ID" value="ABO35766.1"/>
    <property type="molecule type" value="Genomic_DNA"/>
</dbReference>
<dbReference type="RefSeq" id="WP_011869216.1">
    <property type="nucleotide sequence ID" value="NC_009135.1"/>
</dbReference>
<dbReference type="SMR" id="A4FZY2"/>
<dbReference type="STRING" id="402880.MmarC5_1469"/>
<dbReference type="GeneID" id="4927633"/>
<dbReference type="KEGG" id="mmq:MmarC5_1469"/>
<dbReference type="eggNOG" id="arCOG00982">
    <property type="taxonomic scope" value="Archaea"/>
</dbReference>
<dbReference type="HOGENOM" id="CLU_038362_0_0_2"/>
<dbReference type="OrthoDB" id="8656at2157"/>
<dbReference type="UniPathway" id="UPA00940"/>
<dbReference type="Proteomes" id="UP000000253">
    <property type="component" value="Chromosome"/>
</dbReference>
<dbReference type="GO" id="GO:0005737">
    <property type="term" value="C:cytoplasm"/>
    <property type="evidence" value="ECO:0007669"/>
    <property type="project" value="UniProtKB-SubCell"/>
</dbReference>
<dbReference type="GO" id="GO:0106357">
    <property type="term" value="F:glycerol-1-phosphate dehydrogenase (NAD+) activity"/>
    <property type="evidence" value="ECO:0007669"/>
    <property type="project" value="RHEA"/>
</dbReference>
<dbReference type="GO" id="GO:0106358">
    <property type="term" value="F:glycerol-1-phosphate dehydrogenase (NADP+) activity"/>
    <property type="evidence" value="ECO:0007669"/>
    <property type="project" value="RHEA"/>
</dbReference>
<dbReference type="GO" id="GO:0046872">
    <property type="term" value="F:metal ion binding"/>
    <property type="evidence" value="ECO:0007669"/>
    <property type="project" value="UniProtKB-KW"/>
</dbReference>
<dbReference type="GO" id="GO:0006650">
    <property type="term" value="P:glycerophospholipid metabolic process"/>
    <property type="evidence" value="ECO:0007669"/>
    <property type="project" value="UniProtKB-UniRule"/>
</dbReference>
<dbReference type="GO" id="GO:0008654">
    <property type="term" value="P:phospholipid biosynthetic process"/>
    <property type="evidence" value="ECO:0007669"/>
    <property type="project" value="UniProtKB-KW"/>
</dbReference>
<dbReference type="Gene3D" id="3.40.50.1970">
    <property type="match status" value="1"/>
</dbReference>
<dbReference type="Gene3D" id="1.20.1090.10">
    <property type="entry name" value="Dehydroquinate synthase-like - alpha domain"/>
    <property type="match status" value="1"/>
</dbReference>
<dbReference type="HAMAP" id="MF_00497_A">
    <property type="entry name" value="G1P_dehydrogenase_A"/>
    <property type="match status" value="1"/>
</dbReference>
<dbReference type="InterPro" id="IPR023002">
    <property type="entry name" value="G1P_dehydrogenase_arc"/>
</dbReference>
<dbReference type="InterPro" id="IPR032837">
    <property type="entry name" value="G1PDH"/>
</dbReference>
<dbReference type="InterPro" id="IPR016205">
    <property type="entry name" value="Glycerol_DH"/>
</dbReference>
<dbReference type="PANTHER" id="PTHR43616">
    <property type="entry name" value="GLYCEROL DEHYDROGENASE"/>
    <property type="match status" value="1"/>
</dbReference>
<dbReference type="PANTHER" id="PTHR43616:SF5">
    <property type="entry name" value="GLYCEROL DEHYDROGENASE 1"/>
    <property type="match status" value="1"/>
</dbReference>
<dbReference type="Pfam" id="PF13685">
    <property type="entry name" value="Fe-ADH_2"/>
    <property type="match status" value="1"/>
</dbReference>
<dbReference type="PIRSF" id="PIRSF000112">
    <property type="entry name" value="Glycerol_dehydrogenase"/>
    <property type="match status" value="1"/>
</dbReference>
<dbReference type="SUPFAM" id="SSF56796">
    <property type="entry name" value="Dehydroquinate synthase-like"/>
    <property type="match status" value="1"/>
</dbReference>
<sequence length="334" mass="36831">MIVIPRYTIIKEKASSRIPEILDNLNLKNPLVITGKNTKKYNKDFDFIYYDEIETSDLENIKNYANDYDSIMGIGGGRPIDIGKLIAHKSKKPFLSVPTTASNDGIASPIVSLTQPSYMTEAPIAIIADIGIIKKSPKKLLSAGMGDIVSNITAVLDWELGKIEKSEKYSDSSGIFSKTIAIELMDYVLNSNLEEYPKKLVKALIGSGISIAIAHSSRPASGSEHLFSHALDIMKEKYDIDTDSLHGEQCGVGTLAIAQIYFEEKKLDIETFEMIKKSLKAVDAPITAKQLGFDDEIVIEALSSAHALRNRHTILRNGISKTEARKILEKSEII</sequence>
<gene>
    <name evidence="1" type="primary">egsA</name>
    <name type="ordered locus">MmarC5_1469</name>
</gene>
<comment type="function">
    <text evidence="1">Catalyzes the NAD(P)H-dependent reduction of dihydroxyacetonephosphate (DHAP or glycerone phosphate) to glycerol 1-phosphate (G1P). The G1P thus generated is used as the glycerophosphate backbone of phospholipids in the cellular membranes of Archaea.</text>
</comment>
<comment type="catalytic activity">
    <reaction evidence="1">
        <text>sn-glycerol 1-phosphate + NAD(+) = dihydroxyacetone phosphate + NADH + H(+)</text>
        <dbReference type="Rhea" id="RHEA:21412"/>
        <dbReference type="ChEBI" id="CHEBI:15378"/>
        <dbReference type="ChEBI" id="CHEBI:57540"/>
        <dbReference type="ChEBI" id="CHEBI:57642"/>
        <dbReference type="ChEBI" id="CHEBI:57685"/>
        <dbReference type="ChEBI" id="CHEBI:57945"/>
        <dbReference type="EC" id="1.1.1.261"/>
    </reaction>
</comment>
<comment type="catalytic activity">
    <reaction evidence="1">
        <text>sn-glycerol 1-phosphate + NADP(+) = dihydroxyacetone phosphate + NADPH + H(+)</text>
        <dbReference type="Rhea" id="RHEA:21416"/>
        <dbReference type="ChEBI" id="CHEBI:15378"/>
        <dbReference type="ChEBI" id="CHEBI:57642"/>
        <dbReference type="ChEBI" id="CHEBI:57685"/>
        <dbReference type="ChEBI" id="CHEBI:57783"/>
        <dbReference type="ChEBI" id="CHEBI:58349"/>
        <dbReference type="EC" id="1.1.1.261"/>
    </reaction>
</comment>
<comment type="cofactor">
    <cofactor evidence="1">
        <name>Zn(2+)</name>
        <dbReference type="ChEBI" id="CHEBI:29105"/>
    </cofactor>
    <text evidence="1">Binds 1 zinc ion per subunit.</text>
</comment>
<comment type="pathway">
    <text evidence="1">Membrane lipid metabolism; glycerophospholipid metabolism.</text>
</comment>
<comment type="subcellular location">
    <subcellularLocation>
        <location evidence="1">Cytoplasm</location>
    </subcellularLocation>
</comment>
<comment type="similarity">
    <text evidence="1">Belongs to the glycerol-1-phosphate dehydrogenase family.</text>
</comment>
<protein>
    <recommendedName>
        <fullName evidence="1">Glycerol-1-phosphate dehydrogenase [NAD(P)+]</fullName>
        <shortName evidence="1">G1P dehydrogenase</shortName>
        <shortName evidence="1">G1PDH</shortName>
        <ecNumber evidence="1">1.1.1.261</ecNumber>
    </recommendedName>
    <alternativeName>
        <fullName evidence="1">Enantiomeric glycerophosphate synthase</fullName>
    </alternativeName>
    <alternativeName>
        <fullName evidence="1">sn-glycerol-1-phosphate dehydrogenase</fullName>
    </alternativeName>
</protein>
<organism>
    <name type="scientific">Methanococcus maripaludis (strain C5 / ATCC BAA-1333)</name>
    <dbReference type="NCBI Taxonomy" id="402880"/>
    <lineage>
        <taxon>Archaea</taxon>
        <taxon>Methanobacteriati</taxon>
        <taxon>Methanobacteriota</taxon>
        <taxon>Methanomada group</taxon>
        <taxon>Methanococci</taxon>
        <taxon>Methanococcales</taxon>
        <taxon>Methanococcaceae</taxon>
        <taxon>Methanococcus</taxon>
    </lineage>
</organism>
<reference key="1">
    <citation type="submission" date="2007-03" db="EMBL/GenBank/DDBJ databases">
        <title>Complete sequence of chromosome of Methanococcus maripaludis C5.</title>
        <authorList>
            <consortium name="US DOE Joint Genome Institute"/>
            <person name="Copeland A."/>
            <person name="Lucas S."/>
            <person name="Lapidus A."/>
            <person name="Barry K."/>
            <person name="Glavina del Rio T."/>
            <person name="Dalin E."/>
            <person name="Tice H."/>
            <person name="Pitluck S."/>
            <person name="Chertkov O."/>
            <person name="Brettin T."/>
            <person name="Bruce D."/>
            <person name="Han C."/>
            <person name="Detter J.C."/>
            <person name="Schmutz J."/>
            <person name="Larimer F."/>
            <person name="Land M."/>
            <person name="Hauser L."/>
            <person name="Kyrpides N."/>
            <person name="Mikhailova N."/>
            <person name="Sieprawska-Lupa M."/>
            <person name="Whitman W.B."/>
            <person name="Richardson P."/>
        </authorList>
    </citation>
    <scope>NUCLEOTIDE SEQUENCE [LARGE SCALE GENOMIC DNA]</scope>
    <source>
        <strain>C5 / ATCC BAA-1333</strain>
    </source>
</reference>
<evidence type="ECO:0000255" key="1">
    <source>
        <dbReference type="HAMAP-Rule" id="MF_00497"/>
    </source>
</evidence>
<feature type="chain" id="PRO_0000350653" description="Glycerol-1-phosphate dehydrogenase [NAD(P)+]">
    <location>
        <begin position="1"/>
        <end position="334"/>
    </location>
</feature>
<feature type="binding site" evidence="1">
    <location>
        <begin position="77"/>
        <end position="81"/>
    </location>
    <ligand>
        <name>NAD(+)</name>
        <dbReference type="ChEBI" id="CHEBI:57540"/>
    </ligand>
</feature>
<feature type="binding site" evidence="1">
    <location>
        <begin position="99"/>
        <end position="102"/>
    </location>
    <ligand>
        <name>NAD(+)</name>
        <dbReference type="ChEBI" id="CHEBI:57540"/>
    </ligand>
</feature>
<feature type="binding site" evidence="1">
    <location>
        <position position="104"/>
    </location>
    <ligand>
        <name>substrate</name>
    </ligand>
</feature>
<feature type="binding site" evidence="1">
    <location>
        <position position="108"/>
    </location>
    <ligand>
        <name>NAD(+)</name>
        <dbReference type="ChEBI" id="CHEBI:57540"/>
    </ligand>
</feature>
<feature type="binding site" evidence="1">
    <location>
        <position position="147"/>
    </location>
    <ligand>
        <name>substrate</name>
    </ligand>
</feature>
<feature type="binding site" evidence="1">
    <location>
        <position position="147"/>
    </location>
    <ligand>
        <name>Zn(2+)</name>
        <dbReference type="ChEBI" id="CHEBI:29105"/>
        <note>catalytic</note>
    </ligand>
</feature>
<feature type="binding site" evidence="1">
    <location>
        <position position="225"/>
    </location>
    <ligand>
        <name>Zn(2+)</name>
        <dbReference type="ChEBI" id="CHEBI:29105"/>
        <note>catalytic</note>
    </ligand>
</feature>
<feature type="binding site" evidence="1">
    <location>
        <position position="229"/>
    </location>
    <ligand>
        <name>substrate</name>
    </ligand>
</feature>
<feature type="binding site" evidence="1">
    <location>
        <position position="246"/>
    </location>
    <ligand>
        <name>Zn(2+)</name>
        <dbReference type="ChEBI" id="CHEBI:29105"/>
        <note>catalytic</note>
    </ligand>
</feature>
<keyword id="KW-0963">Cytoplasm</keyword>
<keyword id="KW-0444">Lipid biosynthesis</keyword>
<keyword id="KW-0443">Lipid metabolism</keyword>
<keyword id="KW-0479">Metal-binding</keyword>
<keyword id="KW-0520">NAD</keyword>
<keyword id="KW-0521">NADP</keyword>
<keyword id="KW-0560">Oxidoreductase</keyword>
<keyword id="KW-0594">Phospholipid biosynthesis</keyword>
<keyword id="KW-1208">Phospholipid metabolism</keyword>
<keyword id="KW-0862">Zinc</keyword>
<proteinExistence type="inferred from homology"/>